<sequence length="336" mass="39800">MNLYPWLQHSYKQIIYPHYINKGHHSIILESHKNIGITCLAKHISLWLLCQKKNKSIYHCKTCHSCQLMNSKNHPDWHYFGSNTCLSKNSSKTIGVNEVRNFTNTIFNSAQQGQNKIVYIPNIKKLTEFAINSLLKIIEEPPQNTYFLLINYLPHKIITTLRSRCIIHNLYGPTKENRIEWLKEQNINTNQKIHMSMLYSNEISFISKCKHSLFFLYQERLNFFETLLTSFQEKNFLKMLNVLNNKKCLDQIFIWICGIILDSIKWKHDINTIIINTDQTKIIQILASNFSILSLDNSYKSWIYCYNNIKNIPGINIELLFVKQLLYWEEILNIFN</sequence>
<evidence type="ECO:0000250" key="1"/>
<dbReference type="EC" id="2.7.7.7"/>
<dbReference type="EMBL" id="AE016826">
    <property type="protein sequence ID" value="AAO27046.1"/>
    <property type="molecule type" value="Genomic_DNA"/>
</dbReference>
<dbReference type="RefSeq" id="WP_011091447.1">
    <property type="nucleotide sequence ID" value="NC_004545.1"/>
</dbReference>
<dbReference type="SMR" id="Q89AG8"/>
<dbReference type="STRING" id="224915.bbp_324"/>
<dbReference type="KEGG" id="bab:bbp_324"/>
<dbReference type="eggNOG" id="COG0470">
    <property type="taxonomic scope" value="Bacteria"/>
</dbReference>
<dbReference type="HOGENOM" id="CLU_006229_4_3_6"/>
<dbReference type="OrthoDB" id="9811073at2"/>
<dbReference type="Proteomes" id="UP000000601">
    <property type="component" value="Chromosome"/>
</dbReference>
<dbReference type="GO" id="GO:0009360">
    <property type="term" value="C:DNA polymerase III complex"/>
    <property type="evidence" value="ECO:0007669"/>
    <property type="project" value="InterPro"/>
</dbReference>
<dbReference type="GO" id="GO:0003677">
    <property type="term" value="F:DNA binding"/>
    <property type="evidence" value="ECO:0007669"/>
    <property type="project" value="InterPro"/>
</dbReference>
<dbReference type="GO" id="GO:0003887">
    <property type="term" value="F:DNA-directed DNA polymerase activity"/>
    <property type="evidence" value="ECO:0007669"/>
    <property type="project" value="UniProtKB-KW"/>
</dbReference>
<dbReference type="GO" id="GO:0006261">
    <property type="term" value="P:DNA-templated DNA replication"/>
    <property type="evidence" value="ECO:0007669"/>
    <property type="project" value="TreeGrafter"/>
</dbReference>
<dbReference type="Gene3D" id="1.20.272.10">
    <property type="match status" value="1"/>
</dbReference>
<dbReference type="Gene3D" id="3.40.50.300">
    <property type="entry name" value="P-loop containing nucleotide triphosphate hydrolases"/>
    <property type="match status" value="1"/>
</dbReference>
<dbReference type="InterPro" id="IPR008921">
    <property type="entry name" value="DNA_pol3_clamp-load_cplx_C"/>
</dbReference>
<dbReference type="InterPro" id="IPR015199">
    <property type="entry name" value="DNA_pol_III_delta_C"/>
</dbReference>
<dbReference type="InterPro" id="IPR050238">
    <property type="entry name" value="DNA_Rep/Repair_Clamp_Loader"/>
</dbReference>
<dbReference type="InterPro" id="IPR027417">
    <property type="entry name" value="P-loop_NTPase"/>
</dbReference>
<dbReference type="PANTHER" id="PTHR11669:SF8">
    <property type="entry name" value="DNA POLYMERASE III SUBUNIT DELTA"/>
    <property type="match status" value="1"/>
</dbReference>
<dbReference type="PANTHER" id="PTHR11669">
    <property type="entry name" value="REPLICATION FACTOR C / DNA POLYMERASE III GAMMA-TAU SUBUNIT"/>
    <property type="match status" value="1"/>
</dbReference>
<dbReference type="Pfam" id="PF13177">
    <property type="entry name" value="DNA_pol3_delta2"/>
    <property type="match status" value="1"/>
</dbReference>
<dbReference type="Pfam" id="PF09115">
    <property type="entry name" value="DNApol3-delta_C"/>
    <property type="match status" value="1"/>
</dbReference>
<dbReference type="SUPFAM" id="SSF52540">
    <property type="entry name" value="P-loop containing nucleoside triphosphate hydrolases"/>
    <property type="match status" value="1"/>
</dbReference>
<dbReference type="SUPFAM" id="SSF48019">
    <property type="entry name" value="post-AAA+ oligomerization domain-like"/>
    <property type="match status" value="1"/>
</dbReference>
<name>HOLB_BUCBP</name>
<protein>
    <recommendedName>
        <fullName>DNA polymerase III subunit delta'</fullName>
        <ecNumber>2.7.7.7</ecNumber>
    </recommendedName>
</protein>
<organism>
    <name type="scientific">Buchnera aphidicola subsp. Baizongia pistaciae (strain Bp)</name>
    <dbReference type="NCBI Taxonomy" id="224915"/>
    <lineage>
        <taxon>Bacteria</taxon>
        <taxon>Pseudomonadati</taxon>
        <taxon>Pseudomonadota</taxon>
        <taxon>Gammaproteobacteria</taxon>
        <taxon>Enterobacterales</taxon>
        <taxon>Erwiniaceae</taxon>
        <taxon>Buchnera</taxon>
    </lineage>
</organism>
<feature type="chain" id="PRO_0000105512" description="DNA polymerase III subunit delta'">
    <location>
        <begin position="1"/>
        <end position="336"/>
    </location>
</feature>
<proteinExistence type="inferred from homology"/>
<accession>Q89AG8</accession>
<keyword id="KW-0235">DNA replication</keyword>
<keyword id="KW-0239">DNA-directed DNA polymerase</keyword>
<keyword id="KW-0548">Nucleotidyltransferase</keyword>
<keyword id="KW-1185">Reference proteome</keyword>
<keyword id="KW-0808">Transferase</keyword>
<gene>
    <name type="primary">holB</name>
    <name type="ordered locus">bbp_324</name>
</gene>
<reference key="1">
    <citation type="journal article" date="2003" name="Proc. Natl. Acad. Sci. U.S.A.">
        <title>Reductive genome evolution in Buchnera aphidicola.</title>
        <authorList>
            <person name="van Ham R.C.H.J."/>
            <person name="Kamerbeek J."/>
            <person name="Palacios C."/>
            <person name="Rausell C."/>
            <person name="Abascal F."/>
            <person name="Bastolla U."/>
            <person name="Fernandez J.M."/>
            <person name="Jimenez L."/>
            <person name="Postigo M."/>
            <person name="Silva F.J."/>
            <person name="Tamames J."/>
            <person name="Viguera E."/>
            <person name="Latorre A."/>
            <person name="Valencia A."/>
            <person name="Moran F."/>
            <person name="Moya A."/>
        </authorList>
    </citation>
    <scope>NUCLEOTIDE SEQUENCE [LARGE SCALE GENOMIC DNA]</scope>
    <source>
        <strain>Bp</strain>
    </source>
</reference>
<comment type="function">
    <text evidence="1">DNA polymerase III is a complex, multichain enzyme responsible for most of the replicative synthesis in bacteria. This DNA polymerase also exhibits 3' to 5' exonuclease activity (By similarity).</text>
</comment>
<comment type="catalytic activity">
    <reaction>
        <text>DNA(n) + a 2'-deoxyribonucleoside 5'-triphosphate = DNA(n+1) + diphosphate</text>
        <dbReference type="Rhea" id="RHEA:22508"/>
        <dbReference type="Rhea" id="RHEA-COMP:17339"/>
        <dbReference type="Rhea" id="RHEA-COMP:17340"/>
        <dbReference type="ChEBI" id="CHEBI:33019"/>
        <dbReference type="ChEBI" id="CHEBI:61560"/>
        <dbReference type="ChEBI" id="CHEBI:173112"/>
        <dbReference type="EC" id="2.7.7.7"/>
    </reaction>
</comment>
<comment type="subunit">
    <text evidence="1">DNA polymerase III contains a core (composed of alpha, epsilon and theta chains) that associates with a tau subunit. This core dimerizes to form the POLIII' complex. PolIII' associates with the gamma complex (composed of gamma, delta, delta', psi and chi chains) and with the beta chain to form the complete DNA polymerase III complex (By similarity).</text>
</comment>